<accession>Q21HK6</accession>
<keyword id="KW-0004">4Fe-4S</keyword>
<keyword id="KW-0408">Iron</keyword>
<keyword id="KW-0411">Iron-sulfur</keyword>
<keyword id="KW-0414">Isoprene biosynthesis</keyword>
<keyword id="KW-0479">Metal-binding</keyword>
<keyword id="KW-0560">Oxidoreductase</keyword>
<keyword id="KW-1185">Reference proteome</keyword>
<proteinExistence type="inferred from homology"/>
<comment type="function">
    <text evidence="1">Catalyzes the conversion of 1-hydroxy-2-methyl-2-(E)-butenyl 4-diphosphate (HMBPP) into a mixture of isopentenyl diphosphate (IPP) and dimethylallyl diphosphate (DMAPP). Acts in the terminal step of the DOXP/MEP pathway for isoprenoid precursor biosynthesis.</text>
</comment>
<comment type="catalytic activity">
    <reaction evidence="1">
        <text>isopentenyl diphosphate + 2 oxidized [2Fe-2S]-[ferredoxin] + H2O = (2E)-4-hydroxy-3-methylbut-2-enyl diphosphate + 2 reduced [2Fe-2S]-[ferredoxin] + 2 H(+)</text>
        <dbReference type="Rhea" id="RHEA:24488"/>
        <dbReference type="Rhea" id="RHEA-COMP:10000"/>
        <dbReference type="Rhea" id="RHEA-COMP:10001"/>
        <dbReference type="ChEBI" id="CHEBI:15377"/>
        <dbReference type="ChEBI" id="CHEBI:15378"/>
        <dbReference type="ChEBI" id="CHEBI:33737"/>
        <dbReference type="ChEBI" id="CHEBI:33738"/>
        <dbReference type="ChEBI" id="CHEBI:128753"/>
        <dbReference type="ChEBI" id="CHEBI:128769"/>
        <dbReference type="EC" id="1.17.7.4"/>
    </reaction>
</comment>
<comment type="catalytic activity">
    <reaction evidence="1">
        <text>dimethylallyl diphosphate + 2 oxidized [2Fe-2S]-[ferredoxin] + H2O = (2E)-4-hydroxy-3-methylbut-2-enyl diphosphate + 2 reduced [2Fe-2S]-[ferredoxin] + 2 H(+)</text>
        <dbReference type="Rhea" id="RHEA:24825"/>
        <dbReference type="Rhea" id="RHEA-COMP:10000"/>
        <dbReference type="Rhea" id="RHEA-COMP:10001"/>
        <dbReference type="ChEBI" id="CHEBI:15377"/>
        <dbReference type="ChEBI" id="CHEBI:15378"/>
        <dbReference type="ChEBI" id="CHEBI:33737"/>
        <dbReference type="ChEBI" id="CHEBI:33738"/>
        <dbReference type="ChEBI" id="CHEBI:57623"/>
        <dbReference type="ChEBI" id="CHEBI:128753"/>
        <dbReference type="EC" id="1.17.7.4"/>
    </reaction>
</comment>
<comment type="cofactor">
    <cofactor evidence="1">
        <name>[4Fe-4S] cluster</name>
        <dbReference type="ChEBI" id="CHEBI:49883"/>
    </cofactor>
    <text evidence="1">Binds 1 [4Fe-4S] cluster per subunit.</text>
</comment>
<comment type="pathway">
    <text evidence="1">Isoprenoid biosynthesis; dimethylallyl diphosphate biosynthesis; dimethylallyl diphosphate from (2E)-4-hydroxy-3-methylbutenyl diphosphate: step 1/1.</text>
</comment>
<comment type="pathway">
    <text evidence="1">Isoprenoid biosynthesis; isopentenyl diphosphate biosynthesis via DXP pathway; isopentenyl diphosphate from 1-deoxy-D-xylulose 5-phosphate: step 6/6.</text>
</comment>
<comment type="similarity">
    <text evidence="1">Belongs to the IspH family.</text>
</comment>
<name>ISPH_SACD2</name>
<reference key="1">
    <citation type="journal article" date="2008" name="PLoS Genet.">
        <title>Complete genome sequence of the complex carbohydrate-degrading marine bacterium, Saccharophagus degradans strain 2-40 T.</title>
        <authorList>
            <person name="Weiner R.M."/>
            <person name="Taylor L.E. II"/>
            <person name="Henrissat B."/>
            <person name="Hauser L."/>
            <person name="Land M."/>
            <person name="Coutinho P.M."/>
            <person name="Rancurel C."/>
            <person name="Saunders E.H."/>
            <person name="Longmire A.G."/>
            <person name="Zhang H."/>
            <person name="Bayer E.A."/>
            <person name="Gilbert H.J."/>
            <person name="Larimer F."/>
            <person name="Zhulin I.B."/>
            <person name="Ekborg N.A."/>
            <person name="Lamed R."/>
            <person name="Richardson P.M."/>
            <person name="Borovok I."/>
            <person name="Hutcheson S."/>
        </authorList>
    </citation>
    <scope>NUCLEOTIDE SEQUENCE [LARGE SCALE GENOMIC DNA]</scope>
    <source>
        <strain>2-40 / ATCC 43961 / DSM 17024</strain>
    </source>
</reference>
<protein>
    <recommendedName>
        <fullName evidence="1">4-hydroxy-3-methylbut-2-enyl diphosphate reductase</fullName>
        <shortName evidence="1">HMBPP reductase</shortName>
        <ecNumber evidence="1">1.17.7.4</ecNumber>
    </recommendedName>
</protein>
<dbReference type="EC" id="1.17.7.4" evidence="1"/>
<dbReference type="EMBL" id="CP000282">
    <property type="protein sequence ID" value="ABD81823.1"/>
    <property type="molecule type" value="Genomic_DNA"/>
</dbReference>
<dbReference type="RefSeq" id="WP_011469040.1">
    <property type="nucleotide sequence ID" value="NC_007912.1"/>
</dbReference>
<dbReference type="SMR" id="Q21HK6"/>
<dbReference type="STRING" id="203122.Sde_2563"/>
<dbReference type="GeneID" id="98614226"/>
<dbReference type="KEGG" id="sde:Sde_2563"/>
<dbReference type="eggNOG" id="COG0761">
    <property type="taxonomic scope" value="Bacteria"/>
</dbReference>
<dbReference type="HOGENOM" id="CLU_027486_1_1_6"/>
<dbReference type="OrthoDB" id="9804068at2"/>
<dbReference type="UniPathway" id="UPA00056">
    <property type="reaction ID" value="UER00097"/>
</dbReference>
<dbReference type="UniPathway" id="UPA00059">
    <property type="reaction ID" value="UER00105"/>
</dbReference>
<dbReference type="Proteomes" id="UP000001947">
    <property type="component" value="Chromosome"/>
</dbReference>
<dbReference type="GO" id="GO:0051539">
    <property type="term" value="F:4 iron, 4 sulfur cluster binding"/>
    <property type="evidence" value="ECO:0007669"/>
    <property type="project" value="UniProtKB-UniRule"/>
</dbReference>
<dbReference type="GO" id="GO:0051745">
    <property type="term" value="F:4-hydroxy-3-methylbut-2-enyl diphosphate reductase activity"/>
    <property type="evidence" value="ECO:0007669"/>
    <property type="project" value="UniProtKB-UniRule"/>
</dbReference>
<dbReference type="GO" id="GO:0046872">
    <property type="term" value="F:metal ion binding"/>
    <property type="evidence" value="ECO:0007669"/>
    <property type="project" value="UniProtKB-KW"/>
</dbReference>
<dbReference type="GO" id="GO:0050992">
    <property type="term" value="P:dimethylallyl diphosphate biosynthetic process"/>
    <property type="evidence" value="ECO:0007669"/>
    <property type="project" value="UniProtKB-UniRule"/>
</dbReference>
<dbReference type="GO" id="GO:0019288">
    <property type="term" value="P:isopentenyl diphosphate biosynthetic process, methylerythritol 4-phosphate pathway"/>
    <property type="evidence" value="ECO:0007669"/>
    <property type="project" value="UniProtKB-UniRule"/>
</dbReference>
<dbReference type="GO" id="GO:0016114">
    <property type="term" value="P:terpenoid biosynthetic process"/>
    <property type="evidence" value="ECO:0007669"/>
    <property type="project" value="UniProtKB-UniRule"/>
</dbReference>
<dbReference type="CDD" id="cd13944">
    <property type="entry name" value="lytB_ispH"/>
    <property type="match status" value="1"/>
</dbReference>
<dbReference type="Gene3D" id="3.40.50.11270">
    <property type="match status" value="1"/>
</dbReference>
<dbReference type="Gene3D" id="3.40.1010.20">
    <property type="entry name" value="4-hydroxy-3-methylbut-2-enyl diphosphate reductase, catalytic domain"/>
    <property type="match status" value="2"/>
</dbReference>
<dbReference type="HAMAP" id="MF_00191">
    <property type="entry name" value="IspH"/>
    <property type="match status" value="1"/>
</dbReference>
<dbReference type="InterPro" id="IPR003451">
    <property type="entry name" value="LytB/IspH"/>
</dbReference>
<dbReference type="NCBIfam" id="TIGR00216">
    <property type="entry name" value="ispH_lytB"/>
    <property type="match status" value="1"/>
</dbReference>
<dbReference type="NCBIfam" id="NF002188">
    <property type="entry name" value="PRK01045.1-2"/>
    <property type="match status" value="1"/>
</dbReference>
<dbReference type="NCBIfam" id="NF002190">
    <property type="entry name" value="PRK01045.1-4"/>
    <property type="match status" value="1"/>
</dbReference>
<dbReference type="PANTHER" id="PTHR30426">
    <property type="entry name" value="4-HYDROXY-3-METHYLBUT-2-ENYL DIPHOSPHATE REDUCTASE"/>
    <property type="match status" value="1"/>
</dbReference>
<dbReference type="PANTHER" id="PTHR30426:SF0">
    <property type="entry name" value="4-HYDROXY-3-METHYLBUT-2-ENYL DIPHOSPHATE REDUCTASE"/>
    <property type="match status" value="1"/>
</dbReference>
<dbReference type="Pfam" id="PF02401">
    <property type="entry name" value="LYTB"/>
    <property type="match status" value="1"/>
</dbReference>
<feature type="chain" id="PRO_1000021176" description="4-hydroxy-3-methylbut-2-enyl diphosphate reductase">
    <location>
        <begin position="1"/>
        <end position="311"/>
    </location>
</feature>
<feature type="active site" description="Proton donor" evidence="1">
    <location>
        <position position="126"/>
    </location>
</feature>
<feature type="binding site" evidence="1">
    <location>
        <position position="12"/>
    </location>
    <ligand>
        <name>[4Fe-4S] cluster</name>
        <dbReference type="ChEBI" id="CHEBI:49883"/>
    </ligand>
</feature>
<feature type="binding site" evidence="1">
    <location>
        <position position="41"/>
    </location>
    <ligand>
        <name>(2E)-4-hydroxy-3-methylbut-2-enyl diphosphate</name>
        <dbReference type="ChEBI" id="CHEBI:128753"/>
    </ligand>
</feature>
<feature type="binding site" evidence="1">
    <location>
        <position position="41"/>
    </location>
    <ligand>
        <name>dimethylallyl diphosphate</name>
        <dbReference type="ChEBI" id="CHEBI:57623"/>
    </ligand>
</feature>
<feature type="binding site" evidence="1">
    <location>
        <position position="41"/>
    </location>
    <ligand>
        <name>isopentenyl diphosphate</name>
        <dbReference type="ChEBI" id="CHEBI:128769"/>
    </ligand>
</feature>
<feature type="binding site" evidence="1">
    <location>
        <position position="74"/>
    </location>
    <ligand>
        <name>(2E)-4-hydroxy-3-methylbut-2-enyl diphosphate</name>
        <dbReference type="ChEBI" id="CHEBI:128753"/>
    </ligand>
</feature>
<feature type="binding site" evidence="1">
    <location>
        <position position="74"/>
    </location>
    <ligand>
        <name>dimethylallyl diphosphate</name>
        <dbReference type="ChEBI" id="CHEBI:57623"/>
    </ligand>
</feature>
<feature type="binding site" evidence="1">
    <location>
        <position position="74"/>
    </location>
    <ligand>
        <name>isopentenyl diphosphate</name>
        <dbReference type="ChEBI" id="CHEBI:128769"/>
    </ligand>
</feature>
<feature type="binding site" evidence="1">
    <location>
        <position position="96"/>
    </location>
    <ligand>
        <name>[4Fe-4S] cluster</name>
        <dbReference type="ChEBI" id="CHEBI:49883"/>
    </ligand>
</feature>
<feature type="binding site" evidence="1">
    <location>
        <position position="124"/>
    </location>
    <ligand>
        <name>(2E)-4-hydroxy-3-methylbut-2-enyl diphosphate</name>
        <dbReference type="ChEBI" id="CHEBI:128753"/>
    </ligand>
</feature>
<feature type="binding site" evidence="1">
    <location>
        <position position="124"/>
    </location>
    <ligand>
        <name>dimethylallyl diphosphate</name>
        <dbReference type="ChEBI" id="CHEBI:57623"/>
    </ligand>
</feature>
<feature type="binding site" evidence="1">
    <location>
        <position position="124"/>
    </location>
    <ligand>
        <name>isopentenyl diphosphate</name>
        <dbReference type="ChEBI" id="CHEBI:128769"/>
    </ligand>
</feature>
<feature type="binding site" evidence="1">
    <location>
        <position position="168"/>
    </location>
    <ligand>
        <name>(2E)-4-hydroxy-3-methylbut-2-enyl diphosphate</name>
        <dbReference type="ChEBI" id="CHEBI:128753"/>
    </ligand>
</feature>
<feature type="binding site" evidence="1">
    <location>
        <position position="198"/>
    </location>
    <ligand>
        <name>[4Fe-4S] cluster</name>
        <dbReference type="ChEBI" id="CHEBI:49883"/>
    </ligand>
</feature>
<feature type="binding site" evidence="1">
    <location>
        <position position="226"/>
    </location>
    <ligand>
        <name>(2E)-4-hydroxy-3-methylbut-2-enyl diphosphate</name>
        <dbReference type="ChEBI" id="CHEBI:128753"/>
    </ligand>
</feature>
<feature type="binding site" evidence="1">
    <location>
        <position position="226"/>
    </location>
    <ligand>
        <name>dimethylallyl diphosphate</name>
        <dbReference type="ChEBI" id="CHEBI:57623"/>
    </ligand>
</feature>
<feature type="binding site" evidence="1">
    <location>
        <position position="226"/>
    </location>
    <ligand>
        <name>isopentenyl diphosphate</name>
        <dbReference type="ChEBI" id="CHEBI:128769"/>
    </ligand>
</feature>
<feature type="binding site" evidence="1">
    <location>
        <position position="227"/>
    </location>
    <ligand>
        <name>(2E)-4-hydroxy-3-methylbut-2-enyl diphosphate</name>
        <dbReference type="ChEBI" id="CHEBI:128753"/>
    </ligand>
</feature>
<feature type="binding site" evidence="1">
    <location>
        <position position="227"/>
    </location>
    <ligand>
        <name>dimethylallyl diphosphate</name>
        <dbReference type="ChEBI" id="CHEBI:57623"/>
    </ligand>
</feature>
<feature type="binding site" evidence="1">
    <location>
        <position position="227"/>
    </location>
    <ligand>
        <name>isopentenyl diphosphate</name>
        <dbReference type="ChEBI" id="CHEBI:128769"/>
    </ligand>
</feature>
<feature type="binding site" evidence="1">
    <location>
        <position position="228"/>
    </location>
    <ligand>
        <name>(2E)-4-hydroxy-3-methylbut-2-enyl diphosphate</name>
        <dbReference type="ChEBI" id="CHEBI:128753"/>
    </ligand>
</feature>
<feature type="binding site" evidence="1">
    <location>
        <position position="228"/>
    </location>
    <ligand>
        <name>dimethylallyl diphosphate</name>
        <dbReference type="ChEBI" id="CHEBI:57623"/>
    </ligand>
</feature>
<feature type="binding site" evidence="1">
    <location>
        <position position="228"/>
    </location>
    <ligand>
        <name>isopentenyl diphosphate</name>
        <dbReference type="ChEBI" id="CHEBI:128769"/>
    </ligand>
</feature>
<feature type="binding site" evidence="1">
    <location>
        <position position="270"/>
    </location>
    <ligand>
        <name>(2E)-4-hydroxy-3-methylbut-2-enyl diphosphate</name>
        <dbReference type="ChEBI" id="CHEBI:128753"/>
    </ligand>
</feature>
<feature type="binding site" evidence="1">
    <location>
        <position position="270"/>
    </location>
    <ligand>
        <name>dimethylallyl diphosphate</name>
        <dbReference type="ChEBI" id="CHEBI:57623"/>
    </ligand>
</feature>
<feature type="binding site" evidence="1">
    <location>
        <position position="270"/>
    </location>
    <ligand>
        <name>isopentenyl diphosphate</name>
        <dbReference type="ChEBI" id="CHEBI:128769"/>
    </ligand>
</feature>
<gene>
    <name evidence="1" type="primary">ispH</name>
    <name type="ordered locus">Sde_2563</name>
</gene>
<evidence type="ECO:0000255" key="1">
    <source>
        <dbReference type="HAMAP-Rule" id="MF_00191"/>
    </source>
</evidence>
<organism>
    <name type="scientific">Saccharophagus degradans (strain 2-40 / ATCC 43961 / DSM 17024)</name>
    <dbReference type="NCBI Taxonomy" id="203122"/>
    <lineage>
        <taxon>Bacteria</taxon>
        <taxon>Pseudomonadati</taxon>
        <taxon>Pseudomonadota</taxon>
        <taxon>Gammaproteobacteria</taxon>
        <taxon>Cellvibrionales</taxon>
        <taxon>Cellvibrionaceae</taxon>
        <taxon>Saccharophagus</taxon>
    </lineage>
</organism>
<sequence>MEIKLANPRGFCAGVDRAIDIVNRALDVFGAPIYVRHEVVHNKFVVERLKERGAIFVDELEAVPDDVIVIFSAHGVSQAVRQEADRRGLKVFDATCPLVTKVHMEVAKYSNDGCECVLIGHEGHPEVEGTMGQYDTANGGAIYLVEDESDVEQLEVRDPTRLSYVTQTTLSMDDTARVIDSLRAKFPHITGPRKDDICYATQNRQDAVKQLALECDLVLVVGSPNSSNSNRLRELAERCGTAAYLIDGPEDLDKSWFANCKNIGITAGASAPEVLVRDVIEGLKAIGASAPVELQGQEENISFSLPKELRV</sequence>